<name>POA1_ASPOR</name>
<keyword id="KW-0378">Hydrolase</keyword>
<keyword id="KW-0904">Protein phosphatase</keyword>
<keyword id="KW-1185">Reference proteome</keyword>
<proteinExistence type="inferred from homology"/>
<organism>
    <name type="scientific">Aspergillus oryzae (strain ATCC 42149 / RIB 40)</name>
    <name type="common">Yellow koji mold</name>
    <dbReference type="NCBI Taxonomy" id="510516"/>
    <lineage>
        <taxon>Eukaryota</taxon>
        <taxon>Fungi</taxon>
        <taxon>Dikarya</taxon>
        <taxon>Ascomycota</taxon>
        <taxon>Pezizomycotina</taxon>
        <taxon>Eurotiomycetes</taxon>
        <taxon>Eurotiomycetidae</taxon>
        <taxon>Eurotiales</taxon>
        <taxon>Aspergillaceae</taxon>
        <taxon>Aspergillus</taxon>
        <taxon>Aspergillus subgen. Circumdati</taxon>
    </lineage>
</organism>
<protein>
    <recommendedName>
        <fullName>ADP-ribose 1''-phosphate phosphatase</fullName>
        <ecNumber>3.1.3.84</ecNumber>
    </recommendedName>
</protein>
<dbReference type="EC" id="3.1.3.84"/>
<dbReference type="EMBL" id="BA000049">
    <property type="protein sequence ID" value="BAE56033.1"/>
    <property type="molecule type" value="Genomic_DNA"/>
</dbReference>
<dbReference type="SMR" id="Q2UQY2"/>
<dbReference type="EnsemblFungi" id="BAE56033">
    <property type="protein sequence ID" value="BAE56033"/>
    <property type="gene ID" value="AO090005001055"/>
</dbReference>
<dbReference type="VEuPathDB" id="FungiDB:AO090005001055"/>
<dbReference type="HOGENOM" id="CLU_054419_1_0_1"/>
<dbReference type="OMA" id="CQGSWGK"/>
<dbReference type="Proteomes" id="UP000006564">
    <property type="component" value="Chromosome 1"/>
</dbReference>
<dbReference type="GO" id="GO:0004721">
    <property type="term" value="F:phosphoprotein phosphatase activity"/>
    <property type="evidence" value="ECO:0007669"/>
    <property type="project" value="UniProtKB-KW"/>
</dbReference>
<dbReference type="GO" id="GO:0140291">
    <property type="term" value="P:peptidyl-glutamate ADP-deribosylation"/>
    <property type="evidence" value="ECO:0007669"/>
    <property type="project" value="TreeGrafter"/>
</dbReference>
<dbReference type="Gene3D" id="3.40.220.10">
    <property type="entry name" value="Leucine Aminopeptidase, subunit E, domain 1"/>
    <property type="match status" value="1"/>
</dbReference>
<dbReference type="InterPro" id="IPR050892">
    <property type="entry name" value="ADP-ribose_metab_enzymes"/>
</dbReference>
<dbReference type="InterPro" id="IPR002589">
    <property type="entry name" value="Macro_dom"/>
</dbReference>
<dbReference type="InterPro" id="IPR043472">
    <property type="entry name" value="Macro_dom-like"/>
</dbReference>
<dbReference type="PANTHER" id="PTHR12521:SF0">
    <property type="entry name" value="ADP-RIBOSE GLYCOHYDROLASE OARD1"/>
    <property type="match status" value="1"/>
</dbReference>
<dbReference type="PANTHER" id="PTHR12521">
    <property type="entry name" value="PROTEIN C6ORF130"/>
    <property type="match status" value="1"/>
</dbReference>
<dbReference type="Pfam" id="PF01661">
    <property type="entry name" value="Macro"/>
    <property type="match status" value="1"/>
</dbReference>
<dbReference type="SMART" id="SM00506">
    <property type="entry name" value="A1pp"/>
    <property type="match status" value="1"/>
</dbReference>
<dbReference type="SUPFAM" id="SSF52949">
    <property type="entry name" value="Macro domain-like"/>
    <property type="match status" value="1"/>
</dbReference>
<dbReference type="PROSITE" id="PS51154">
    <property type="entry name" value="MACRO"/>
    <property type="match status" value="1"/>
</dbReference>
<feature type="chain" id="PRO_0000324903" description="ADP-ribose 1''-phosphate phosphatase">
    <location>
        <begin position="1"/>
        <end position="201"/>
    </location>
</feature>
<feature type="domain" description="Macro" evidence="2">
    <location>
        <begin position="1"/>
        <end position="201"/>
    </location>
</feature>
<feature type="binding site" evidence="1">
    <location>
        <begin position="15"/>
        <end position="17"/>
    </location>
    <ligand>
        <name>substrate</name>
    </ligand>
</feature>
<feature type="binding site" evidence="1">
    <location>
        <begin position="29"/>
        <end position="31"/>
    </location>
    <ligand>
        <name>substrate</name>
    </ligand>
</feature>
<feature type="binding site" evidence="1">
    <location>
        <begin position="36"/>
        <end position="41"/>
    </location>
    <ligand>
        <name>substrate</name>
    </ligand>
</feature>
<feature type="binding site" evidence="1">
    <location>
        <begin position="168"/>
        <end position="174"/>
    </location>
    <ligand>
        <name>substrate</name>
    </ligand>
</feature>
<reference key="1">
    <citation type="journal article" date="2005" name="Nature">
        <title>Genome sequencing and analysis of Aspergillus oryzae.</title>
        <authorList>
            <person name="Machida M."/>
            <person name="Asai K."/>
            <person name="Sano M."/>
            <person name="Tanaka T."/>
            <person name="Kumagai T."/>
            <person name="Terai G."/>
            <person name="Kusumoto K."/>
            <person name="Arima T."/>
            <person name="Akita O."/>
            <person name="Kashiwagi Y."/>
            <person name="Abe K."/>
            <person name="Gomi K."/>
            <person name="Horiuchi H."/>
            <person name="Kitamoto K."/>
            <person name="Kobayashi T."/>
            <person name="Takeuchi M."/>
            <person name="Denning D.W."/>
            <person name="Galagan J.E."/>
            <person name="Nierman W.C."/>
            <person name="Yu J."/>
            <person name="Archer D.B."/>
            <person name="Bennett J.W."/>
            <person name="Bhatnagar D."/>
            <person name="Cleveland T.E."/>
            <person name="Fedorova N.D."/>
            <person name="Gotoh O."/>
            <person name="Horikawa H."/>
            <person name="Hosoyama A."/>
            <person name="Ichinomiya M."/>
            <person name="Igarashi R."/>
            <person name="Iwashita K."/>
            <person name="Juvvadi P.R."/>
            <person name="Kato M."/>
            <person name="Kato Y."/>
            <person name="Kin T."/>
            <person name="Kokubun A."/>
            <person name="Maeda H."/>
            <person name="Maeyama N."/>
            <person name="Maruyama J."/>
            <person name="Nagasaki H."/>
            <person name="Nakajima T."/>
            <person name="Oda K."/>
            <person name="Okada K."/>
            <person name="Paulsen I."/>
            <person name="Sakamoto K."/>
            <person name="Sawano T."/>
            <person name="Takahashi M."/>
            <person name="Takase K."/>
            <person name="Terabayashi Y."/>
            <person name="Wortman J.R."/>
            <person name="Yamada O."/>
            <person name="Yamagata Y."/>
            <person name="Anazawa H."/>
            <person name="Hata Y."/>
            <person name="Koide Y."/>
            <person name="Komori T."/>
            <person name="Koyama Y."/>
            <person name="Minetoki T."/>
            <person name="Suharnan S."/>
            <person name="Tanaka A."/>
            <person name="Isono K."/>
            <person name="Kuhara S."/>
            <person name="Ogasawara N."/>
            <person name="Kikuchi H."/>
        </authorList>
    </citation>
    <scope>NUCLEOTIDE SEQUENCE [LARGE SCALE GENOMIC DNA]</scope>
    <source>
        <strain>ATCC 42149 / RIB 40</strain>
    </source>
</reference>
<accession>Q2UQY2</accession>
<comment type="function">
    <text evidence="1">Highly specific phosphatase involved in the metabolism of ADP-ribose 1''-phosphate (Appr1p) which is produced as a consequence of tRNA splicing.</text>
</comment>
<comment type="catalytic activity">
    <reaction>
        <text>ADP-alpha-D-ribose 1''-phosphate + H2O = ADP-D-ribose + phosphate</text>
        <dbReference type="Rhea" id="RHEA:25029"/>
        <dbReference type="ChEBI" id="CHEBI:15377"/>
        <dbReference type="ChEBI" id="CHEBI:43474"/>
        <dbReference type="ChEBI" id="CHEBI:57967"/>
        <dbReference type="ChEBI" id="CHEBI:58753"/>
        <dbReference type="EC" id="3.1.3.84"/>
    </reaction>
</comment>
<comment type="similarity">
    <text evidence="3">Belongs to the POA1 family.</text>
</comment>
<sequence>MASKATQGSIKEIQGDLFDAPDGAALIHACNCIGSWGGGIAKAFKQKYPAAYNIYHSHCQKYKFSPEYLVTSDPPNQPNNAQSSTRNKEIQLPEGTALIIPPQEKDYKDKDKKHWIICLFTSRNYGKRVSPPDVIIRNTELAVADMVRQIHRLRAEESGIGELWSCRFNSGLFGVEWVLSKRVLEESGLDFVVVRPVDEDE</sequence>
<gene>
    <name type="primary">poa1</name>
    <name type="ORF">AO090005001055</name>
</gene>
<evidence type="ECO:0000250" key="1"/>
<evidence type="ECO:0000255" key="2">
    <source>
        <dbReference type="PROSITE-ProRule" id="PRU00490"/>
    </source>
</evidence>
<evidence type="ECO:0000305" key="3"/>